<reference key="1">
    <citation type="journal article" date="2011" name="BMC Genomics">
        <title>Complete genome sequence of the filamentous anoxygenic phototrophic bacterium Chloroflexus aurantiacus.</title>
        <authorList>
            <person name="Tang K.H."/>
            <person name="Barry K."/>
            <person name="Chertkov O."/>
            <person name="Dalin E."/>
            <person name="Han C.S."/>
            <person name="Hauser L.J."/>
            <person name="Honchak B.M."/>
            <person name="Karbach L.E."/>
            <person name="Land M.L."/>
            <person name="Lapidus A."/>
            <person name="Larimer F.W."/>
            <person name="Mikhailova N."/>
            <person name="Pitluck S."/>
            <person name="Pierson B.K."/>
            <person name="Blankenship R.E."/>
        </authorList>
    </citation>
    <scope>NUCLEOTIDE SEQUENCE [LARGE SCALE GENOMIC DNA]</scope>
    <source>
        <strain>ATCC 29366 / DSM 635 / J-10-fl</strain>
    </source>
</reference>
<name>RL17_CHLAA</name>
<accession>A9WH94</accession>
<comment type="subunit">
    <text evidence="1">Part of the 50S ribosomal subunit. Contacts protein L32.</text>
</comment>
<comment type="similarity">
    <text evidence="1">Belongs to the bacterial ribosomal protein bL17 family.</text>
</comment>
<gene>
    <name evidence="1" type="primary">rplQ</name>
    <name type="ordered locus">Caur_2397</name>
</gene>
<sequence length="116" mass="13094">MRHRHAGKLLGRSYEHRKALYRNLMIALIEHKKIKTTLAKARAVQPEVEALISIAREDTPHARRMALSKLASKEAMRKLFTFAPTTYGGRNGGYTRITKLGPRRGDGAEMALIELI</sequence>
<proteinExistence type="inferred from homology"/>
<protein>
    <recommendedName>
        <fullName evidence="1">Large ribosomal subunit protein bL17</fullName>
    </recommendedName>
    <alternativeName>
        <fullName evidence="2">50S ribosomal protein L17</fullName>
    </alternativeName>
</protein>
<feature type="chain" id="PRO_1000087163" description="Large ribosomal subunit protein bL17">
    <location>
        <begin position="1"/>
        <end position="116"/>
    </location>
</feature>
<dbReference type="EMBL" id="CP000909">
    <property type="protein sequence ID" value="ABY35606.1"/>
    <property type="molecule type" value="Genomic_DNA"/>
</dbReference>
<dbReference type="RefSeq" id="WP_012258259.1">
    <property type="nucleotide sequence ID" value="NC_010175.1"/>
</dbReference>
<dbReference type="RefSeq" id="YP_001635995.1">
    <property type="nucleotide sequence ID" value="NC_010175.1"/>
</dbReference>
<dbReference type="SMR" id="A9WH94"/>
<dbReference type="FunCoup" id="A9WH94">
    <property type="interactions" value="420"/>
</dbReference>
<dbReference type="STRING" id="324602.Caur_2397"/>
<dbReference type="EnsemblBacteria" id="ABY35606">
    <property type="protein sequence ID" value="ABY35606"/>
    <property type="gene ID" value="Caur_2397"/>
</dbReference>
<dbReference type="KEGG" id="cau:Caur_2397"/>
<dbReference type="PATRIC" id="fig|324602.8.peg.2711"/>
<dbReference type="eggNOG" id="COG0203">
    <property type="taxonomic scope" value="Bacteria"/>
</dbReference>
<dbReference type="HOGENOM" id="CLU_074407_2_0_0"/>
<dbReference type="InParanoid" id="A9WH94"/>
<dbReference type="Proteomes" id="UP000002008">
    <property type="component" value="Chromosome"/>
</dbReference>
<dbReference type="GO" id="GO:0022625">
    <property type="term" value="C:cytosolic large ribosomal subunit"/>
    <property type="evidence" value="ECO:0000318"/>
    <property type="project" value="GO_Central"/>
</dbReference>
<dbReference type="GO" id="GO:0003735">
    <property type="term" value="F:structural constituent of ribosome"/>
    <property type="evidence" value="ECO:0000318"/>
    <property type="project" value="GO_Central"/>
</dbReference>
<dbReference type="GO" id="GO:0006412">
    <property type="term" value="P:translation"/>
    <property type="evidence" value="ECO:0007669"/>
    <property type="project" value="UniProtKB-UniRule"/>
</dbReference>
<dbReference type="Gene3D" id="3.90.1030.10">
    <property type="entry name" value="Ribosomal protein L17"/>
    <property type="match status" value="1"/>
</dbReference>
<dbReference type="HAMAP" id="MF_01368">
    <property type="entry name" value="Ribosomal_bL17"/>
    <property type="match status" value="1"/>
</dbReference>
<dbReference type="InterPro" id="IPR000456">
    <property type="entry name" value="Ribosomal_bL17"/>
</dbReference>
<dbReference type="InterPro" id="IPR036373">
    <property type="entry name" value="Ribosomal_bL17_sf"/>
</dbReference>
<dbReference type="NCBIfam" id="TIGR00059">
    <property type="entry name" value="L17"/>
    <property type="match status" value="1"/>
</dbReference>
<dbReference type="PANTHER" id="PTHR14413:SF16">
    <property type="entry name" value="LARGE RIBOSOMAL SUBUNIT PROTEIN BL17M"/>
    <property type="match status" value="1"/>
</dbReference>
<dbReference type="PANTHER" id="PTHR14413">
    <property type="entry name" value="RIBOSOMAL PROTEIN L17"/>
    <property type="match status" value="1"/>
</dbReference>
<dbReference type="Pfam" id="PF01196">
    <property type="entry name" value="Ribosomal_L17"/>
    <property type="match status" value="1"/>
</dbReference>
<dbReference type="SUPFAM" id="SSF64263">
    <property type="entry name" value="Prokaryotic ribosomal protein L17"/>
    <property type="match status" value="1"/>
</dbReference>
<organism>
    <name type="scientific">Chloroflexus aurantiacus (strain ATCC 29366 / DSM 635 / J-10-fl)</name>
    <dbReference type="NCBI Taxonomy" id="324602"/>
    <lineage>
        <taxon>Bacteria</taxon>
        <taxon>Bacillati</taxon>
        <taxon>Chloroflexota</taxon>
        <taxon>Chloroflexia</taxon>
        <taxon>Chloroflexales</taxon>
        <taxon>Chloroflexineae</taxon>
        <taxon>Chloroflexaceae</taxon>
        <taxon>Chloroflexus</taxon>
    </lineage>
</organism>
<keyword id="KW-1185">Reference proteome</keyword>
<keyword id="KW-0687">Ribonucleoprotein</keyword>
<keyword id="KW-0689">Ribosomal protein</keyword>
<evidence type="ECO:0000255" key="1">
    <source>
        <dbReference type="HAMAP-Rule" id="MF_01368"/>
    </source>
</evidence>
<evidence type="ECO:0000305" key="2"/>